<proteinExistence type="evidence at protein level"/>
<keyword id="KW-0044">Antibiotic</keyword>
<keyword id="KW-0929">Antimicrobial</keyword>
<keyword id="KW-0204">Cytolysis</keyword>
<keyword id="KW-0903">Direct protein sequencing</keyword>
<keyword id="KW-0354">Hemolysis</keyword>
<keyword id="KW-0964">Secreted</keyword>
<evidence type="ECO:0000269" key="1">
    <source>
    </source>
</evidence>
<evidence type="ECO:0000303" key="2">
    <source>
    </source>
</evidence>
<evidence type="ECO:0000303" key="3">
    <source>
    </source>
</evidence>
<evidence type="ECO:0000305" key="4"/>
<evidence type="ECO:0000305" key="5">
    <source>
    </source>
</evidence>
<name>LTX2A_ECTBR</name>
<reference key="1">
    <citation type="journal article" date="2014" name="Biochimie">
        <title>Linear antimicrobial peptides from Ectatomma quadridens ant venom.</title>
        <authorList>
            <person name="Pluzhnikov K.A."/>
            <person name="Kozlov S.A."/>
            <person name="Vassilevski A.A."/>
            <person name="Vorontsova O.V."/>
            <person name="Feofanov A.V."/>
            <person name="Grishin E.V."/>
        </authorList>
    </citation>
    <scope>PROTEIN SEQUENCE</scope>
    <scope>FUNCTION</scope>
    <scope>SUBCELLULAR LOCATION</scope>
    <scope>MASS SPECTROMETRY</scope>
    <source>
        <tissue>Venom</tissue>
    </source>
</reference>
<reference key="2">
    <citation type="journal article" date="2016" name="Toxins">
        <title>The biochemical toxin arsenal from ant venoms.</title>
        <authorList>
            <person name="Touchard A."/>
            <person name="Aili S.R."/>
            <person name="Fox E.G."/>
            <person name="Escoubas P."/>
            <person name="Orivel J."/>
            <person name="Nicholson G.M."/>
            <person name="Dejean A."/>
        </authorList>
    </citation>
    <scope>REVIEW</scope>
    <scope>NOMENCLATURE</scope>
</reference>
<organism>
    <name type="scientific">Ectatomma brunneum</name>
    <name type="common">Ant</name>
    <name type="synonym">Ectatomma quadridens</name>
    <dbReference type="NCBI Taxonomy" id="369127"/>
    <lineage>
        <taxon>Eukaryota</taxon>
        <taxon>Metazoa</taxon>
        <taxon>Ecdysozoa</taxon>
        <taxon>Arthropoda</taxon>
        <taxon>Hexapoda</taxon>
        <taxon>Insecta</taxon>
        <taxon>Pterygota</taxon>
        <taxon>Neoptera</taxon>
        <taxon>Endopterygota</taxon>
        <taxon>Hymenoptera</taxon>
        <taxon>Apocrita</taxon>
        <taxon>Aculeata</taxon>
        <taxon>Formicoidea</taxon>
        <taxon>Formicidae</taxon>
        <taxon>Ectatomminae</taxon>
        <taxon>Ectatommini</taxon>
        <taxon>Ectatomma</taxon>
    </lineage>
</organism>
<comment type="function">
    <text evidence="1">Antimicrobial peptide forming an alpha-helix in watery and membraneous environments, enabling it to perforate membranes. Active against Gram-negative bacteria E.coli DH5alpha (MIC=5 uM), E.coli MH1 (MIC=0.6 uM) and P.aeruginosa PAO1 (MIC=10 uM) and against Gram-positive bacteria B.subtilis VKM B-501 (MIC=0.6 uM) and A.globiformis VKM Ac-1112 (MIC=0.2 uM). Has cytolytic and hemolytic activity.</text>
</comment>
<comment type="subcellular location">
    <subcellularLocation>
        <location evidence="1">Secreted</location>
    </subcellularLocation>
</comment>
<comment type="tissue specificity">
    <text evidence="5">Expressed by the venom gland.</text>
</comment>
<comment type="mass spectrometry" mass="3158.6" method="MALDI" evidence="1"/>
<comment type="similarity">
    <text evidence="4">Belongs to the ponericin-Q family.</text>
</comment>
<feature type="peptide" id="PRO_0000437654" description="M-ectatotoxin-Eb2a" evidence="1">
    <location>
        <begin position="1"/>
        <end position="27"/>
    </location>
</feature>
<protein>
    <recommendedName>
        <fullName evidence="3">M-ectatotoxin-Eb2a</fullName>
        <shortName evidence="3">M-ECTX-Eb2a</shortName>
    </recommendedName>
    <alternativeName>
        <fullName evidence="2">Ponericin-Q42</fullName>
    </alternativeName>
</protein>
<dbReference type="GO" id="GO:0005576">
    <property type="term" value="C:extracellular region"/>
    <property type="evidence" value="ECO:0007669"/>
    <property type="project" value="UniProtKB-SubCell"/>
</dbReference>
<dbReference type="GO" id="GO:0042742">
    <property type="term" value="P:defense response to bacterium"/>
    <property type="evidence" value="ECO:0007669"/>
    <property type="project" value="UniProtKB-KW"/>
</dbReference>
<dbReference type="GO" id="GO:0031640">
    <property type="term" value="P:killing of cells of another organism"/>
    <property type="evidence" value="ECO:0007669"/>
    <property type="project" value="UniProtKB-KW"/>
</dbReference>
<accession>C0HK45</accession>
<sequence length="27" mass="3161">FWGAVWKILSKVLPHIPGTVKWLQEKV</sequence>